<evidence type="ECO:0000255" key="1">
    <source>
        <dbReference type="HAMAP-Rule" id="MF_00254"/>
    </source>
</evidence>
<protein>
    <recommendedName>
        <fullName evidence="1">Glycine--tRNA ligase alpha subunit</fullName>
        <ecNumber evidence="1">6.1.1.14</ecNumber>
    </recommendedName>
    <alternativeName>
        <fullName evidence="1">Glycyl-tRNA synthetase alpha subunit</fullName>
        <shortName evidence="1">GlyRS</shortName>
    </alternativeName>
</protein>
<keyword id="KW-0030">Aminoacyl-tRNA synthetase</keyword>
<keyword id="KW-0067">ATP-binding</keyword>
<keyword id="KW-0963">Cytoplasm</keyword>
<keyword id="KW-0436">Ligase</keyword>
<keyword id="KW-0547">Nucleotide-binding</keyword>
<keyword id="KW-0648">Protein biosynthesis</keyword>
<keyword id="KW-1185">Reference proteome</keyword>
<sequence>MTFQDLILSLQGYWAKQGCIIQQPYDTEKGAGTFNPATFLRVLGPEPWNVAYVEPSRRPTDGRYGENPNRLQHYYQFQVIMKPSPLNILDRYLDSLRAFGLDPCKHDIRFVEDDWESPTLGAWGLGWEVWLDGMEITQFTYFQQAGGIDLKPVSSEITYGCERIAMYLQGVDNVYDLEWVKGIKYGDIHHESEVEFSKYNFEEADVDMLLKLFGMYEKECLRLVERDLVLPAYDYVMKCSHAFNLLDARGAISVTERASYIGRVRNVARVCAEGYLRMRERLGFPLLKGGVA</sequence>
<feature type="chain" id="PRO_1000047456" description="Glycine--tRNA ligase alpha subunit">
    <location>
        <begin position="1"/>
        <end position="292"/>
    </location>
</feature>
<name>SYGA_PELPD</name>
<organism>
    <name type="scientific">Pelobacter propionicus (strain DSM 2379 / NBRC 103807 / OttBd1)</name>
    <dbReference type="NCBI Taxonomy" id="338966"/>
    <lineage>
        <taxon>Bacteria</taxon>
        <taxon>Pseudomonadati</taxon>
        <taxon>Thermodesulfobacteriota</taxon>
        <taxon>Desulfuromonadia</taxon>
        <taxon>Desulfuromonadales</taxon>
        <taxon>Desulfuromonadaceae</taxon>
        <taxon>Pelobacter</taxon>
    </lineage>
</organism>
<dbReference type="EC" id="6.1.1.14" evidence="1"/>
<dbReference type="EMBL" id="CP000482">
    <property type="protein sequence ID" value="ABL00656.1"/>
    <property type="molecule type" value="Genomic_DNA"/>
</dbReference>
<dbReference type="RefSeq" id="WP_011736891.1">
    <property type="nucleotide sequence ID" value="NC_008609.1"/>
</dbReference>
<dbReference type="SMR" id="A1ATI5"/>
<dbReference type="STRING" id="338966.Ppro_3060"/>
<dbReference type="KEGG" id="ppd:Ppro_3060"/>
<dbReference type="eggNOG" id="COG0752">
    <property type="taxonomic scope" value="Bacteria"/>
</dbReference>
<dbReference type="HOGENOM" id="CLU_057066_1_0_7"/>
<dbReference type="OrthoDB" id="9802183at2"/>
<dbReference type="Proteomes" id="UP000006732">
    <property type="component" value="Chromosome"/>
</dbReference>
<dbReference type="GO" id="GO:0005829">
    <property type="term" value="C:cytosol"/>
    <property type="evidence" value="ECO:0007669"/>
    <property type="project" value="TreeGrafter"/>
</dbReference>
<dbReference type="GO" id="GO:0005524">
    <property type="term" value="F:ATP binding"/>
    <property type="evidence" value="ECO:0007669"/>
    <property type="project" value="UniProtKB-UniRule"/>
</dbReference>
<dbReference type="GO" id="GO:0004820">
    <property type="term" value="F:glycine-tRNA ligase activity"/>
    <property type="evidence" value="ECO:0007669"/>
    <property type="project" value="UniProtKB-UniRule"/>
</dbReference>
<dbReference type="GO" id="GO:0006426">
    <property type="term" value="P:glycyl-tRNA aminoacylation"/>
    <property type="evidence" value="ECO:0007669"/>
    <property type="project" value="UniProtKB-UniRule"/>
</dbReference>
<dbReference type="CDD" id="cd00733">
    <property type="entry name" value="GlyRS_alpha_core"/>
    <property type="match status" value="1"/>
</dbReference>
<dbReference type="FunFam" id="3.30.930.10:FF:000006">
    <property type="entry name" value="Glycine--tRNA ligase alpha subunit"/>
    <property type="match status" value="1"/>
</dbReference>
<dbReference type="Gene3D" id="3.30.930.10">
    <property type="entry name" value="Bira Bifunctional Protein, Domain 2"/>
    <property type="match status" value="1"/>
</dbReference>
<dbReference type="Gene3D" id="1.20.58.180">
    <property type="entry name" value="Class II aaRS and biotin synthetases, domain 2"/>
    <property type="match status" value="1"/>
</dbReference>
<dbReference type="HAMAP" id="MF_00254">
    <property type="entry name" value="Gly_tRNA_synth_alpha"/>
    <property type="match status" value="1"/>
</dbReference>
<dbReference type="InterPro" id="IPR045864">
    <property type="entry name" value="aa-tRNA-synth_II/BPL/LPL"/>
</dbReference>
<dbReference type="InterPro" id="IPR006194">
    <property type="entry name" value="Gly-tRNA-synth_heterodimer"/>
</dbReference>
<dbReference type="InterPro" id="IPR002310">
    <property type="entry name" value="Gly-tRNA_ligase_asu"/>
</dbReference>
<dbReference type="NCBIfam" id="TIGR00388">
    <property type="entry name" value="glyQ"/>
    <property type="match status" value="1"/>
</dbReference>
<dbReference type="NCBIfam" id="NF006827">
    <property type="entry name" value="PRK09348.1"/>
    <property type="match status" value="1"/>
</dbReference>
<dbReference type="PANTHER" id="PTHR30075:SF2">
    <property type="entry name" value="GLYCINE--TRNA LIGASE, CHLOROPLASTIC_MITOCHONDRIAL 2"/>
    <property type="match status" value="1"/>
</dbReference>
<dbReference type="PANTHER" id="PTHR30075">
    <property type="entry name" value="GLYCYL-TRNA SYNTHETASE"/>
    <property type="match status" value="1"/>
</dbReference>
<dbReference type="Pfam" id="PF02091">
    <property type="entry name" value="tRNA-synt_2e"/>
    <property type="match status" value="1"/>
</dbReference>
<dbReference type="PRINTS" id="PR01044">
    <property type="entry name" value="TRNASYNTHGA"/>
</dbReference>
<dbReference type="SUPFAM" id="SSF55681">
    <property type="entry name" value="Class II aaRS and biotin synthetases"/>
    <property type="match status" value="1"/>
</dbReference>
<dbReference type="PROSITE" id="PS50861">
    <property type="entry name" value="AA_TRNA_LIGASE_II_GLYAB"/>
    <property type="match status" value="1"/>
</dbReference>
<proteinExistence type="inferred from homology"/>
<reference key="1">
    <citation type="submission" date="2006-10" db="EMBL/GenBank/DDBJ databases">
        <title>Complete sequence of chromosome of Pelobacter propionicus DSM 2379.</title>
        <authorList>
            <consortium name="US DOE Joint Genome Institute"/>
            <person name="Copeland A."/>
            <person name="Lucas S."/>
            <person name="Lapidus A."/>
            <person name="Barry K."/>
            <person name="Detter J.C."/>
            <person name="Glavina del Rio T."/>
            <person name="Hammon N."/>
            <person name="Israni S."/>
            <person name="Dalin E."/>
            <person name="Tice H."/>
            <person name="Pitluck S."/>
            <person name="Saunders E."/>
            <person name="Brettin T."/>
            <person name="Bruce D."/>
            <person name="Han C."/>
            <person name="Tapia R."/>
            <person name="Schmutz J."/>
            <person name="Larimer F."/>
            <person name="Land M."/>
            <person name="Hauser L."/>
            <person name="Kyrpides N."/>
            <person name="Kim E."/>
            <person name="Lovley D."/>
            <person name="Richardson P."/>
        </authorList>
    </citation>
    <scope>NUCLEOTIDE SEQUENCE [LARGE SCALE GENOMIC DNA]</scope>
    <source>
        <strain>DSM 2379 / NBRC 103807 / OttBd1</strain>
    </source>
</reference>
<gene>
    <name evidence="1" type="primary">glyQ</name>
    <name type="ordered locus">Ppro_3060</name>
</gene>
<accession>A1ATI5</accession>
<comment type="catalytic activity">
    <reaction evidence="1">
        <text>tRNA(Gly) + glycine + ATP = glycyl-tRNA(Gly) + AMP + diphosphate</text>
        <dbReference type="Rhea" id="RHEA:16013"/>
        <dbReference type="Rhea" id="RHEA-COMP:9664"/>
        <dbReference type="Rhea" id="RHEA-COMP:9683"/>
        <dbReference type="ChEBI" id="CHEBI:30616"/>
        <dbReference type="ChEBI" id="CHEBI:33019"/>
        <dbReference type="ChEBI" id="CHEBI:57305"/>
        <dbReference type="ChEBI" id="CHEBI:78442"/>
        <dbReference type="ChEBI" id="CHEBI:78522"/>
        <dbReference type="ChEBI" id="CHEBI:456215"/>
        <dbReference type="EC" id="6.1.1.14"/>
    </reaction>
</comment>
<comment type="subunit">
    <text evidence="1">Tetramer of two alpha and two beta subunits.</text>
</comment>
<comment type="subcellular location">
    <subcellularLocation>
        <location evidence="1">Cytoplasm</location>
    </subcellularLocation>
</comment>
<comment type="similarity">
    <text evidence="1">Belongs to the class-II aminoacyl-tRNA synthetase family.</text>
</comment>